<evidence type="ECO:0000250" key="1">
    <source>
        <dbReference type="UniProtKB" id="A5F5Y4"/>
    </source>
</evidence>
<evidence type="ECO:0000250" key="2">
    <source>
        <dbReference type="UniProtKB" id="Q56584"/>
    </source>
</evidence>
<evidence type="ECO:0000255" key="3">
    <source>
        <dbReference type="PROSITE-ProRule" id="PRU00465"/>
    </source>
</evidence>
<evidence type="ECO:0000255" key="4">
    <source>
        <dbReference type="PROSITE-ProRule" id="PRU00716"/>
    </source>
</evidence>
<evidence type="ECO:0000305" key="5"/>
<gene>
    <name type="primary">nqrF</name>
    <name type="synonym">nqr6</name>
</gene>
<name>NQRF_ALTMA</name>
<feature type="chain" id="PRO_0000074488" description="Na(+)-translocating NADH-quinone reductase subunit F">
    <location>
        <begin position="1" status="less than"/>
        <end position="303" status="greater than"/>
    </location>
</feature>
<feature type="domain" description="2Fe-2S ferredoxin-type" evidence="3">
    <location>
        <begin position="1" status="less than"/>
        <end position="45"/>
    </location>
</feature>
<feature type="domain" description="FAD-binding FR-type" evidence="4">
    <location>
        <begin position="58"/>
        <end position="198"/>
    </location>
</feature>
<feature type="region of interest" description="Catalytic">
    <location>
        <begin position="201"/>
        <end position="303" status="greater than"/>
    </location>
</feature>
<feature type="binding site" evidence="3">
    <location>
        <position position="4"/>
    </location>
    <ligand>
        <name>[2Fe-2S] cluster</name>
        <dbReference type="ChEBI" id="CHEBI:190135"/>
    </ligand>
</feature>
<feature type="binding site" evidence="3">
    <location>
        <position position="7"/>
    </location>
    <ligand>
        <name>[2Fe-2S] cluster</name>
        <dbReference type="ChEBI" id="CHEBI:190135"/>
    </ligand>
</feature>
<feature type="binding site" evidence="3">
    <location>
        <position position="39"/>
    </location>
    <ligand>
        <name>[2Fe-2S] cluster</name>
        <dbReference type="ChEBI" id="CHEBI:190135"/>
    </ligand>
</feature>
<feature type="non-terminal residue">
    <location>
        <position position="1"/>
    </location>
</feature>
<feature type="non-terminal residue">
    <location>
        <position position="303"/>
    </location>
</feature>
<comment type="function">
    <text evidence="2">NQR complex catalyzes the reduction of ubiquinone-1 to ubiquinol by two successive reactions, coupled with the transport of Na(+) ions from the cytoplasm to the periplasm. The first step is catalyzed by NqrF, which accepts electrons from NADH and reduces ubiquinone-1 to ubisemiquinone by a one-electron transfer pathway.</text>
</comment>
<comment type="catalytic activity">
    <reaction evidence="2">
        <text>a ubiquinone + n Na(+)(in) + NADH + H(+) = a ubiquinol + n Na(+)(out) + NAD(+)</text>
        <dbReference type="Rhea" id="RHEA:47748"/>
        <dbReference type="Rhea" id="RHEA-COMP:9565"/>
        <dbReference type="Rhea" id="RHEA-COMP:9566"/>
        <dbReference type="ChEBI" id="CHEBI:15378"/>
        <dbReference type="ChEBI" id="CHEBI:16389"/>
        <dbReference type="ChEBI" id="CHEBI:17976"/>
        <dbReference type="ChEBI" id="CHEBI:29101"/>
        <dbReference type="ChEBI" id="CHEBI:57540"/>
        <dbReference type="ChEBI" id="CHEBI:57945"/>
        <dbReference type="EC" id="7.2.1.1"/>
    </reaction>
</comment>
<comment type="cofactor">
    <cofactor evidence="1">
        <name>[2Fe-2S] cluster</name>
        <dbReference type="ChEBI" id="CHEBI:190135"/>
    </cofactor>
    <text evidence="1">Binds 1 [2Fe-2S] cluster.</text>
</comment>
<comment type="cofactor">
    <cofactor evidence="1">
        <name>FAD</name>
        <dbReference type="ChEBI" id="CHEBI:57692"/>
    </cofactor>
</comment>
<comment type="subunit">
    <text evidence="2">Composed of six subunits; NqrA, NqrB, NqrC, NqrD, NqrE and NqrF.</text>
</comment>
<comment type="subcellular location">
    <subcellularLocation>
        <location evidence="5">Cell inner membrane</location>
    </subcellularLocation>
</comment>
<comment type="similarity">
    <text evidence="5">Belongs to the NqrF family.</text>
</comment>
<dbReference type="EC" id="7.2.1.1" evidence="2"/>
<dbReference type="EMBL" id="AB024721">
    <property type="protein sequence ID" value="BAA83758.1"/>
    <property type="molecule type" value="Genomic_DNA"/>
</dbReference>
<dbReference type="SMR" id="Q9LCJ3"/>
<dbReference type="STRING" id="28108.ACZ81_16680"/>
<dbReference type="GO" id="GO:0005886">
    <property type="term" value="C:plasma membrane"/>
    <property type="evidence" value="ECO:0007669"/>
    <property type="project" value="UniProtKB-SubCell"/>
</dbReference>
<dbReference type="GO" id="GO:0051537">
    <property type="term" value="F:2 iron, 2 sulfur cluster binding"/>
    <property type="evidence" value="ECO:0007669"/>
    <property type="project" value="UniProtKB-KW"/>
</dbReference>
<dbReference type="GO" id="GO:0046872">
    <property type="term" value="F:metal ion binding"/>
    <property type="evidence" value="ECO:0007669"/>
    <property type="project" value="UniProtKB-KW"/>
</dbReference>
<dbReference type="GO" id="GO:0016655">
    <property type="term" value="F:oxidoreductase activity, acting on NAD(P)H, quinone or similar compound as acceptor"/>
    <property type="evidence" value="ECO:0007669"/>
    <property type="project" value="InterPro"/>
</dbReference>
<dbReference type="GO" id="GO:0006814">
    <property type="term" value="P:sodium ion transport"/>
    <property type="evidence" value="ECO:0007669"/>
    <property type="project" value="UniProtKB-KW"/>
</dbReference>
<dbReference type="CDD" id="cd00207">
    <property type="entry name" value="fer2"/>
    <property type="match status" value="1"/>
</dbReference>
<dbReference type="CDD" id="cd06188">
    <property type="entry name" value="NADH_quinone_reductase"/>
    <property type="match status" value="1"/>
</dbReference>
<dbReference type="FunFam" id="2.40.30.10:FF:000064">
    <property type="entry name" value="Na(+)-translocating NADH-quinone reductase subunit F"/>
    <property type="match status" value="1"/>
</dbReference>
<dbReference type="FunFam" id="3.40.50.80:FF:000014">
    <property type="entry name" value="Na(+)-translocating NADH-quinone reductase subunit F"/>
    <property type="match status" value="1"/>
</dbReference>
<dbReference type="Gene3D" id="3.10.20.30">
    <property type="match status" value="1"/>
</dbReference>
<dbReference type="Gene3D" id="3.40.50.80">
    <property type="entry name" value="Nucleotide-binding domain of ferredoxin-NADP reductase (FNR) module"/>
    <property type="match status" value="1"/>
</dbReference>
<dbReference type="Gene3D" id="2.40.30.10">
    <property type="entry name" value="Translation factors"/>
    <property type="match status" value="1"/>
</dbReference>
<dbReference type="InterPro" id="IPR036010">
    <property type="entry name" value="2Fe-2S_ferredoxin-like_sf"/>
</dbReference>
<dbReference type="InterPro" id="IPR001041">
    <property type="entry name" value="2Fe-2S_ferredoxin-type"/>
</dbReference>
<dbReference type="InterPro" id="IPR012675">
    <property type="entry name" value="Beta-grasp_dom_sf"/>
</dbReference>
<dbReference type="InterPro" id="IPR008333">
    <property type="entry name" value="Cbr1-like_FAD-bd_dom"/>
</dbReference>
<dbReference type="InterPro" id="IPR017927">
    <property type="entry name" value="FAD-bd_FR_type"/>
</dbReference>
<dbReference type="InterPro" id="IPR039261">
    <property type="entry name" value="FNR_nucleotide-bd"/>
</dbReference>
<dbReference type="InterPro" id="IPR010205">
    <property type="entry name" value="NqrF"/>
</dbReference>
<dbReference type="InterPro" id="IPR001433">
    <property type="entry name" value="OxRdtase_FAD/NAD-bd"/>
</dbReference>
<dbReference type="InterPro" id="IPR017938">
    <property type="entry name" value="Riboflavin_synthase-like_b-brl"/>
</dbReference>
<dbReference type="NCBIfam" id="TIGR01941">
    <property type="entry name" value="nqrF"/>
    <property type="match status" value="1"/>
</dbReference>
<dbReference type="PANTHER" id="PTHR43644">
    <property type="entry name" value="NA(+)-TRANSLOCATING NADH-QUINONE REDUCTASE SUBUNIT"/>
    <property type="match status" value="1"/>
</dbReference>
<dbReference type="PANTHER" id="PTHR43644:SF1">
    <property type="entry name" value="NAD(P)H-FLAVIN REDUCTASE"/>
    <property type="match status" value="1"/>
</dbReference>
<dbReference type="Pfam" id="PF00970">
    <property type="entry name" value="FAD_binding_6"/>
    <property type="match status" value="1"/>
</dbReference>
<dbReference type="Pfam" id="PF00175">
    <property type="entry name" value="NAD_binding_1"/>
    <property type="match status" value="1"/>
</dbReference>
<dbReference type="SUPFAM" id="SSF54292">
    <property type="entry name" value="2Fe-2S ferredoxin-like"/>
    <property type="match status" value="1"/>
</dbReference>
<dbReference type="SUPFAM" id="SSF52343">
    <property type="entry name" value="Ferredoxin reductase-like, C-terminal NADP-linked domain"/>
    <property type="match status" value="1"/>
</dbReference>
<dbReference type="SUPFAM" id="SSF63380">
    <property type="entry name" value="Riboflavin synthase domain-like"/>
    <property type="match status" value="1"/>
</dbReference>
<dbReference type="PROSITE" id="PS51384">
    <property type="entry name" value="FAD_FR"/>
    <property type="match status" value="1"/>
</dbReference>
<protein>
    <recommendedName>
        <fullName>Na(+)-translocating NADH-quinone reductase subunit F</fullName>
        <shortName>Na(+)-NQR subunit F</shortName>
        <shortName>Na(+)-translocating NQR subunit F</shortName>
        <ecNumber evidence="2">7.2.1.1</ecNumber>
    </recommendedName>
    <alternativeName>
        <fullName>NQR complex subunit F</fullName>
    </alternativeName>
    <alternativeName>
        <fullName>NQR-1 subunit F</fullName>
    </alternativeName>
</protein>
<reference key="1">
    <citation type="journal article" date="2000" name="Can. J. Microbiol.">
        <title>Detection of the Na(+)-translocating NADH-quinone reductase in marine bacteria using a PCR technique.</title>
        <authorList>
            <person name="Kato S."/>
            <person name="Yumoto I."/>
        </authorList>
    </citation>
    <scope>NUCLEOTIDE SEQUENCE [GENOMIC DNA]</scope>
    <source>
        <strain>ATCC 27126 / DSM 6062 / IAM 12920 / JCM 20772 / LMG 2843 / NBRC 102226 / 107</strain>
    </source>
</reference>
<accession>Q9LCJ3</accession>
<proteinExistence type="inferred from homology"/>
<keyword id="KW-0001">2Fe-2S</keyword>
<keyword id="KW-0997">Cell inner membrane</keyword>
<keyword id="KW-1003">Cell membrane</keyword>
<keyword id="KW-0274">FAD</keyword>
<keyword id="KW-0285">Flavoprotein</keyword>
<keyword id="KW-0406">Ion transport</keyword>
<keyword id="KW-0408">Iron</keyword>
<keyword id="KW-0411">Iron-sulfur</keyword>
<keyword id="KW-0472">Membrane</keyword>
<keyword id="KW-0479">Metal-binding</keyword>
<keyword id="KW-0520">NAD</keyword>
<keyword id="KW-0915">Sodium</keyword>
<keyword id="KW-0739">Sodium transport</keyword>
<keyword id="KW-1278">Translocase</keyword>
<keyword id="KW-0813">Transport</keyword>
<keyword id="KW-0830">Ubiquinone</keyword>
<organism>
    <name type="scientific">Alteromonas macleodii</name>
    <name type="common">Pseudoalteromonas macleodii</name>
    <dbReference type="NCBI Taxonomy" id="28108"/>
    <lineage>
        <taxon>Bacteria</taxon>
        <taxon>Pseudomonadati</taxon>
        <taxon>Pseudomonadota</taxon>
        <taxon>Gammaproteobacteria</taxon>
        <taxon>Alteromonadales</taxon>
        <taxon>Alteromonadaceae</taxon>
        <taxon>Alteromonas/Salinimonas group</taxon>
        <taxon>Alteromonas</taxon>
    </lineage>
</organism>
<sequence length="303" mass="34506">GGSCGQCRVDVHSGGGEILPTELDHITKGEAREGCRLSCQVAIKQDMEIELEESVFGVKKWDCEVISNDNKATFIKELKLKIPNGESVPFRAGGYIQIEAPAHHVKYKEFDIPEEYRGDWERFGFFDIESKVDEETIRAYSMANYPEEEGIIMLNVRIATPPPNNLSLPAGKMSSYIWSLKEGDKATISGPFGEFFAKETENEMVFVGGGAGMAPMRSHIFDQLRRLKSKRKMSFWYGARSLREMFYTEDFDELAAENDNFEWHVALSDPQPEDNWEGYTGFIHQVLLENYLKDHPAPEDCEY</sequence>